<comment type="function">
    <text evidence="1">Component of the Mediator complex, a coactivator involved in the regulated transcription of nearly all RNA polymerase II-dependent genes. Mediator functions as a bridge to convey information from gene-specific regulatory proteins to the basal RNA polymerase II transcription machinery. Mediator is recruited to promoters by direct interactions with regulatory proteins and serves as a scaffold for the assembly of a functional preinitiation complex with RNA polymerase II and the general transcription factors (By similarity).</text>
</comment>
<comment type="subunit">
    <text evidence="1">Component of the Mediator complex.</text>
</comment>
<comment type="subcellular location">
    <subcellularLocation>
        <location evidence="3">Nucleus</location>
    </subcellularLocation>
</comment>
<comment type="similarity">
    <text evidence="3">Belongs to the Mediator complex subunit 14 family.</text>
</comment>
<sequence length="1639" mass="180128">MAPQPLEQGGAVTSFIPTGQEMAQRQNLIPLGRLIDFIIQRTYHELTVLAELLPRKTDMDRKIEIYNFSASTRQLFIRLLALVKWANSASKVDKSAKIMGFLDKQSMLFIDTADMLSRVARETLVHARLPNFHIPAAVEILTTGSYSRLPSVIRDRIVPPDPITPAEKRQTLQRLNQVIQHRLVTGSLLPQLRKFRIENGRVTFKVDHEFEVSLTVMGDAPTVPWRLLDIDFLVEDKETGDGKALVHPLQVNYIHQLIQGRIVDCTDALAEVYTCLHYFCQSLQLEVLYTQTLRLIRDRLDDHIHVDEYVVGSRLTVSYWRELTNKDPKSELGYRLTIQTDPNDAAKQLAILHVPSIGNKEADIADRAVRSDLLSMERLLVHTVYVRSLARLNDVKTELQLFLKDVEYNIQGTPAMLTVPVLNPCLRAEHIYITVDTHTGMLRCHVPKHLDCPIMPEMQHALNNDWSKLQHLISELRYWITQRRCEKTLQHLPAATQDRLPLIYSHTHPIARMGPHKVFIQLYRHANVILIVELKEKKTCPNEMTYTFYLVLVKPSSVEEGQSPDVLSGQPPQPSAAGGPAPGSDSANAAMPKMYLRVLSMIEFDTFVATHGPGTYIDDPSPTSTSGTSVKRKVSPLDNALSAIGPPLKQQKTIYPAYFIPELAHVVAMCDEKLPFVTLAKEFSMRKIPHGGLQVEANATSLVLKLLTLPQPKPPQAPPTPQQQQQQQQQQQQPGTSDAKSSGAGASANEPKTVHVPPIDKQVWNALLKRLLSVSVRAQVNKSNQTRLWTMELVFYGSPLPSLHHKEQGMRRAVYLQYEMQPVESVSKVVDQLLSDWSKIVYLYTLVHEFREQYNNEKYNLPSMVAIKSYSYTNLLLAYGPNKDVSVNICWDTEAKEFRLVFTGGNSAINAHSMMRDQLQAHLNHNYSLAQVVHMLHETYQPLSSIAKLPIIPHLAILQSPKIPVLSFCIIPQSPTLLRISFQGVYCLEVRFRGGGLCTIRDGAYSRFDRSHVVEEFTPTQGLKGFLSKYVDETAVFRRRSQSEDDNPPSPVTLEDPSAGAGNNGGGGGGGGGAGGGANTFLSGGTGMRGPQSPRDPGLRFAAPLTPPTSSNPHTPASPHPIGGGGGAGGAGGQGGQGGQGGQQQSHMNNFNMTSPPASHMPHPSPGGGLMPSSPLNAQPSPMAAHSPGPSSLSYMQSHTDGSPFAALSPAASNWPGSPGMPRPSPRPGQSPEHKVQTSHHYTSRVLPARSWAGAIPTTLTYEALDTLCRATPHPQKEVPGPELSPLERFLGSVFMRRQLQRIIHQEESLMAITSNEPGVVVFKADCLQYQVFLNPNHMQSLHLKVDQLPMGPMMDGKPPYQWAAQDLQILEQFFDHRVAAPPYRPAVMTSFTRMLNLPAKVLKDFIQIMRLDLMPELVQGNKWNVQFVLRVPPSATPIVPVGTTTILSHRQKILFFIQITRVPYLPNMEWKDAVTMLLPMVYDMNMNHTTLAERREPMPPQLTSAVSAHLRRFSECSVLLPDECSLFPAVHDLLLTLTLPNEPPAPGQMQMQLGGVMQPGGGPGVPGGPGGPMGGQIGGPTPQVVPQVGSSPSPMMHSPMQQMGGGGPQPGAYGGMVGGPGGGPQSGGPVGGGPGGPN</sequence>
<proteinExistence type="inferred from homology"/>
<evidence type="ECO:0000250" key="1"/>
<evidence type="ECO:0000256" key="2">
    <source>
        <dbReference type="SAM" id="MobiDB-lite"/>
    </source>
</evidence>
<evidence type="ECO:0000305" key="3"/>
<gene>
    <name type="primary">MED14</name>
    <name type="ORF">AGAP005700</name>
</gene>
<name>MED14_ANOGA</name>
<dbReference type="EMBL" id="AAAB01008960">
    <property type="protein sequence ID" value="EAA10746.4"/>
    <property type="molecule type" value="Genomic_DNA"/>
</dbReference>
<dbReference type="RefSeq" id="XP_315707.4">
    <property type="nucleotide sequence ID" value="XM_315707.4"/>
</dbReference>
<dbReference type="SMR" id="Q7Q6S8"/>
<dbReference type="FunCoup" id="Q7Q6S8">
    <property type="interactions" value="2411"/>
</dbReference>
<dbReference type="STRING" id="7165.Q7Q6S8"/>
<dbReference type="PaxDb" id="7165-AGAP005700-PA"/>
<dbReference type="GeneID" id="1276369"/>
<dbReference type="KEGG" id="aga:1276369"/>
<dbReference type="CTD" id="9282"/>
<dbReference type="VEuPathDB" id="VectorBase:AGAMI1_001423"/>
<dbReference type="VEuPathDB" id="VectorBase:AGAP005700"/>
<dbReference type="eggNOG" id="KOG1875">
    <property type="taxonomic scope" value="Eukaryota"/>
</dbReference>
<dbReference type="HOGENOM" id="CLU_001928_0_0_1"/>
<dbReference type="InParanoid" id="Q7Q6S8"/>
<dbReference type="OMA" id="KQPAYFI"/>
<dbReference type="OrthoDB" id="205099at2759"/>
<dbReference type="PhylomeDB" id="Q7Q6S8"/>
<dbReference type="Proteomes" id="UP000007062">
    <property type="component" value="Chromosome 2L"/>
</dbReference>
<dbReference type="GO" id="GO:0070847">
    <property type="term" value="C:core mediator complex"/>
    <property type="evidence" value="ECO:0000318"/>
    <property type="project" value="GO_Central"/>
</dbReference>
<dbReference type="GO" id="GO:0016592">
    <property type="term" value="C:mediator complex"/>
    <property type="evidence" value="ECO:0000318"/>
    <property type="project" value="GO_Central"/>
</dbReference>
<dbReference type="GO" id="GO:0003712">
    <property type="term" value="F:transcription coregulator activity"/>
    <property type="evidence" value="ECO:0000318"/>
    <property type="project" value="GO_Central"/>
</dbReference>
<dbReference type="GO" id="GO:0006357">
    <property type="term" value="P:regulation of transcription by RNA polymerase II"/>
    <property type="evidence" value="ECO:0000318"/>
    <property type="project" value="GO_Central"/>
</dbReference>
<dbReference type="InterPro" id="IPR056877">
    <property type="entry name" value="Med14_C"/>
</dbReference>
<dbReference type="InterPro" id="IPR055122">
    <property type="entry name" value="Med14_N"/>
</dbReference>
<dbReference type="InterPro" id="IPR055113">
    <property type="entry name" value="Med14_RM2"/>
</dbReference>
<dbReference type="InterPro" id="IPR055114">
    <property type="entry name" value="Med14_RM6"/>
</dbReference>
<dbReference type="InterPro" id="IPR055107">
    <property type="entry name" value="Med14_RM8"/>
</dbReference>
<dbReference type="InterPro" id="IPR013947">
    <property type="entry name" value="Mediator_Med14"/>
</dbReference>
<dbReference type="InterPro" id="IPR056879">
    <property type="entry name" value="RM3_Med14"/>
</dbReference>
<dbReference type="InterPro" id="IPR056878">
    <property type="entry name" value="RM5_Med14"/>
</dbReference>
<dbReference type="PANTHER" id="PTHR12809">
    <property type="entry name" value="MEDIATOR COMPLEX SUBUNIT"/>
    <property type="match status" value="1"/>
</dbReference>
<dbReference type="PANTHER" id="PTHR12809:SF2">
    <property type="entry name" value="MEDIATOR OF RNA POLYMERASE II TRANSCRIPTION SUBUNIT 14"/>
    <property type="match status" value="1"/>
</dbReference>
<dbReference type="Pfam" id="PF08638">
    <property type="entry name" value="Med14"/>
    <property type="match status" value="1"/>
</dbReference>
<dbReference type="Pfam" id="PF25069">
    <property type="entry name" value="Med14_C"/>
    <property type="match status" value="1"/>
</dbReference>
<dbReference type="Pfam" id="PF22981">
    <property type="entry name" value="RM2_Med14"/>
    <property type="match status" value="1"/>
</dbReference>
<dbReference type="Pfam" id="PF25065">
    <property type="entry name" value="RM3_Med14"/>
    <property type="match status" value="1"/>
</dbReference>
<dbReference type="Pfam" id="PF25067">
    <property type="entry name" value="RM5_Med14"/>
    <property type="match status" value="2"/>
</dbReference>
<dbReference type="Pfam" id="PF22984">
    <property type="entry name" value="RM6_Med14"/>
    <property type="match status" value="1"/>
</dbReference>
<dbReference type="Pfam" id="PF22983">
    <property type="entry name" value="RM8_Med14"/>
    <property type="match status" value="1"/>
</dbReference>
<feature type="chain" id="PRO_0000304587" description="Mediator of RNA polymerase II transcription subunit 14">
    <location>
        <begin position="1"/>
        <end position="1639"/>
    </location>
</feature>
<feature type="region of interest" description="Disordered" evidence="2">
    <location>
        <begin position="561"/>
        <end position="586"/>
    </location>
</feature>
<feature type="region of interest" description="Disordered" evidence="2">
    <location>
        <begin position="709"/>
        <end position="755"/>
    </location>
</feature>
<feature type="region of interest" description="Disordered" evidence="2">
    <location>
        <begin position="1039"/>
        <end position="1243"/>
    </location>
</feature>
<feature type="region of interest" description="Disordered" evidence="2">
    <location>
        <begin position="1558"/>
        <end position="1639"/>
    </location>
</feature>
<feature type="short sequence motif" description="LXXLL motif 1">
    <location>
        <begin position="49"/>
        <end position="53"/>
    </location>
</feature>
<feature type="short sequence motif" description="LXXLL motif 2">
    <location>
        <begin position="768"/>
        <end position="772"/>
    </location>
</feature>
<feature type="compositionally biased region" description="Low complexity" evidence="2">
    <location>
        <begin position="575"/>
        <end position="586"/>
    </location>
</feature>
<feature type="compositionally biased region" description="Pro residues" evidence="2">
    <location>
        <begin position="711"/>
        <end position="721"/>
    </location>
</feature>
<feature type="compositionally biased region" description="Low complexity" evidence="2">
    <location>
        <begin position="722"/>
        <end position="748"/>
    </location>
</feature>
<feature type="compositionally biased region" description="Gly residues" evidence="2">
    <location>
        <begin position="1062"/>
        <end position="1088"/>
    </location>
</feature>
<feature type="compositionally biased region" description="Gly residues" evidence="2">
    <location>
        <begin position="1122"/>
        <end position="1142"/>
    </location>
</feature>
<feature type="compositionally biased region" description="Polar residues" evidence="2">
    <location>
        <begin position="1189"/>
        <end position="1201"/>
    </location>
</feature>
<feature type="compositionally biased region" description="Pro residues" evidence="2">
    <location>
        <begin position="1219"/>
        <end position="1229"/>
    </location>
</feature>
<feature type="compositionally biased region" description="Gly residues" evidence="2">
    <location>
        <begin position="1558"/>
        <end position="1579"/>
    </location>
</feature>
<feature type="compositionally biased region" description="Low complexity" evidence="2">
    <location>
        <begin position="1589"/>
        <end position="1603"/>
    </location>
</feature>
<feature type="compositionally biased region" description="Gly residues" evidence="2">
    <location>
        <begin position="1604"/>
        <end position="1639"/>
    </location>
</feature>
<organism>
    <name type="scientific">Anopheles gambiae</name>
    <name type="common">African malaria mosquito</name>
    <dbReference type="NCBI Taxonomy" id="7165"/>
    <lineage>
        <taxon>Eukaryota</taxon>
        <taxon>Metazoa</taxon>
        <taxon>Ecdysozoa</taxon>
        <taxon>Arthropoda</taxon>
        <taxon>Hexapoda</taxon>
        <taxon>Insecta</taxon>
        <taxon>Pterygota</taxon>
        <taxon>Neoptera</taxon>
        <taxon>Endopterygota</taxon>
        <taxon>Diptera</taxon>
        <taxon>Nematocera</taxon>
        <taxon>Culicoidea</taxon>
        <taxon>Culicidae</taxon>
        <taxon>Anophelinae</taxon>
        <taxon>Anopheles</taxon>
    </lineage>
</organism>
<keyword id="KW-0010">Activator</keyword>
<keyword id="KW-0539">Nucleus</keyword>
<keyword id="KW-1185">Reference proteome</keyword>
<keyword id="KW-0677">Repeat</keyword>
<keyword id="KW-0804">Transcription</keyword>
<keyword id="KW-0805">Transcription regulation</keyword>
<accession>Q7Q6S8</accession>
<reference key="1">
    <citation type="journal article" date="2002" name="Science">
        <title>The genome sequence of the malaria mosquito Anopheles gambiae.</title>
        <authorList>
            <person name="Holt R.A."/>
            <person name="Subramanian G.M."/>
            <person name="Halpern A."/>
            <person name="Sutton G.G."/>
            <person name="Charlab R."/>
            <person name="Nusskern D.R."/>
            <person name="Wincker P."/>
            <person name="Clark A.G."/>
            <person name="Ribeiro J.M.C."/>
            <person name="Wides R."/>
            <person name="Salzberg S.L."/>
            <person name="Loftus B.J."/>
            <person name="Yandell M.D."/>
            <person name="Majoros W.H."/>
            <person name="Rusch D.B."/>
            <person name="Lai Z."/>
            <person name="Kraft C.L."/>
            <person name="Abril J.F."/>
            <person name="Anthouard V."/>
            <person name="Arensburger P."/>
            <person name="Atkinson P.W."/>
            <person name="Baden H."/>
            <person name="de Berardinis V."/>
            <person name="Baldwin D."/>
            <person name="Benes V."/>
            <person name="Biedler J."/>
            <person name="Blass C."/>
            <person name="Bolanos R."/>
            <person name="Boscus D."/>
            <person name="Barnstead M."/>
            <person name="Cai S."/>
            <person name="Center A."/>
            <person name="Chaturverdi K."/>
            <person name="Christophides G.K."/>
            <person name="Chrystal M.A.M."/>
            <person name="Clamp M."/>
            <person name="Cravchik A."/>
            <person name="Curwen V."/>
            <person name="Dana A."/>
            <person name="Delcher A."/>
            <person name="Dew I."/>
            <person name="Evans C.A."/>
            <person name="Flanigan M."/>
            <person name="Grundschober-Freimoser A."/>
            <person name="Friedli L."/>
            <person name="Gu Z."/>
            <person name="Guan P."/>
            <person name="Guigo R."/>
            <person name="Hillenmeyer M.E."/>
            <person name="Hladun S.L."/>
            <person name="Hogan J.R."/>
            <person name="Hong Y.S."/>
            <person name="Hoover J."/>
            <person name="Jaillon O."/>
            <person name="Ke Z."/>
            <person name="Kodira C.D."/>
            <person name="Kokoza E."/>
            <person name="Koutsos A."/>
            <person name="Letunic I."/>
            <person name="Levitsky A.A."/>
            <person name="Liang Y."/>
            <person name="Lin J.-J."/>
            <person name="Lobo N.F."/>
            <person name="Lopez J.R."/>
            <person name="Malek J.A."/>
            <person name="McIntosh T.C."/>
            <person name="Meister S."/>
            <person name="Miller J.R."/>
            <person name="Mobarry C."/>
            <person name="Mongin E."/>
            <person name="Murphy S.D."/>
            <person name="O'Brochta D.A."/>
            <person name="Pfannkoch C."/>
            <person name="Qi R."/>
            <person name="Regier M.A."/>
            <person name="Remington K."/>
            <person name="Shao H."/>
            <person name="Sharakhova M.V."/>
            <person name="Sitter C.D."/>
            <person name="Shetty J."/>
            <person name="Smith T.J."/>
            <person name="Strong R."/>
            <person name="Sun J."/>
            <person name="Thomasova D."/>
            <person name="Ton L.Q."/>
            <person name="Topalis P."/>
            <person name="Tu Z.J."/>
            <person name="Unger M.F."/>
            <person name="Walenz B."/>
            <person name="Wang A.H."/>
            <person name="Wang J."/>
            <person name="Wang M."/>
            <person name="Wang X."/>
            <person name="Woodford K.J."/>
            <person name="Wortman J.R."/>
            <person name="Wu M."/>
            <person name="Yao A."/>
            <person name="Zdobnov E.M."/>
            <person name="Zhang H."/>
            <person name="Zhao Q."/>
            <person name="Zhao S."/>
            <person name="Zhu S.C."/>
            <person name="Zhimulev I."/>
            <person name="Coluzzi M."/>
            <person name="della Torre A."/>
            <person name="Roth C.W."/>
            <person name="Louis C."/>
            <person name="Kalush F."/>
            <person name="Mural R.J."/>
            <person name="Myers E.W."/>
            <person name="Adams M.D."/>
            <person name="Smith H.O."/>
            <person name="Broder S."/>
            <person name="Gardner M.J."/>
            <person name="Fraser C.M."/>
            <person name="Birney E."/>
            <person name="Bork P."/>
            <person name="Brey P.T."/>
            <person name="Venter J.C."/>
            <person name="Weissenbach J."/>
            <person name="Kafatos F.C."/>
            <person name="Collins F.H."/>
            <person name="Hoffman S.L."/>
        </authorList>
    </citation>
    <scope>NUCLEOTIDE SEQUENCE [LARGE SCALE GENOMIC DNA]</scope>
    <source>
        <strain>PEST</strain>
    </source>
</reference>
<protein>
    <recommendedName>
        <fullName>Mediator of RNA polymerase II transcription subunit 14</fullName>
    </recommendedName>
    <alternativeName>
        <fullName>Mediator complex subunit 14</fullName>
    </alternativeName>
</protein>